<protein>
    <recommendedName>
        <fullName evidence="1">Elongation factor G</fullName>
        <shortName evidence="1">EF-G</shortName>
    </recommendedName>
</protein>
<feature type="chain" id="PRO_0000091250" description="Elongation factor G">
    <location>
        <begin position="1"/>
        <end position="690"/>
    </location>
</feature>
<feature type="domain" description="tr-type G">
    <location>
        <begin position="8"/>
        <end position="282"/>
    </location>
</feature>
<feature type="binding site" evidence="1">
    <location>
        <begin position="17"/>
        <end position="24"/>
    </location>
    <ligand>
        <name>GTP</name>
        <dbReference type="ChEBI" id="CHEBI:37565"/>
    </ligand>
</feature>
<feature type="binding site" evidence="1">
    <location>
        <begin position="81"/>
        <end position="85"/>
    </location>
    <ligand>
        <name>GTP</name>
        <dbReference type="ChEBI" id="CHEBI:37565"/>
    </ligand>
</feature>
<feature type="binding site" evidence="1">
    <location>
        <begin position="135"/>
        <end position="138"/>
    </location>
    <ligand>
        <name>GTP</name>
        <dbReference type="ChEBI" id="CHEBI:37565"/>
    </ligand>
</feature>
<comment type="function">
    <text evidence="1">Catalyzes the GTP-dependent ribosomal translocation step during translation elongation. During this step, the ribosome changes from the pre-translocational (PRE) to the post-translocational (POST) state as the newly formed A-site-bound peptidyl-tRNA and P-site-bound deacylated tRNA move to the P and E sites, respectively. Catalyzes the coordinated movement of the two tRNA molecules, the mRNA and conformational changes in the ribosome.</text>
</comment>
<comment type="subcellular location">
    <subcellularLocation>
        <location evidence="1">Cytoplasm</location>
    </subcellularLocation>
</comment>
<comment type="similarity">
    <text evidence="1">Belongs to the TRAFAC class translation factor GTPase superfamily. Classic translation factor GTPase family. EF-G/EF-2 subfamily.</text>
</comment>
<proteinExistence type="inferred from homology"/>
<keyword id="KW-0963">Cytoplasm</keyword>
<keyword id="KW-0251">Elongation factor</keyword>
<keyword id="KW-0342">GTP-binding</keyword>
<keyword id="KW-0547">Nucleotide-binding</keyword>
<keyword id="KW-0648">Protein biosynthesis</keyword>
<keyword id="KW-1185">Reference proteome</keyword>
<gene>
    <name evidence="1" type="primary">fusA</name>
    <name type="ordered locus">TTE2296</name>
</gene>
<evidence type="ECO:0000255" key="1">
    <source>
        <dbReference type="HAMAP-Rule" id="MF_00054"/>
    </source>
</evidence>
<dbReference type="EMBL" id="AE008691">
    <property type="protein sequence ID" value="AAM25438.1"/>
    <property type="molecule type" value="Genomic_DNA"/>
</dbReference>
<dbReference type="RefSeq" id="WP_011026341.1">
    <property type="nucleotide sequence ID" value="NC_003869.1"/>
</dbReference>
<dbReference type="SMR" id="Q8R7V1"/>
<dbReference type="STRING" id="273068.TTE2296"/>
<dbReference type="KEGG" id="tte:TTE2296"/>
<dbReference type="eggNOG" id="COG0480">
    <property type="taxonomic scope" value="Bacteria"/>
</dbReference>
<dbReference type="HOGENOM" id="CLU_002794_4_1_9"/>
<dbReference type="OrthoDB" id="9804431at2"/>
<dbReference type="Proteomes" id="UP000000555">
    <property type="component" value="Chromosome"/>
</dbReference>
<dbReference type="GO" id="GO:0005737">
    <property type="term" value="C:cytoplasm"/>
    <property type="evidence" value="ECO:0007669"/>
    <property type="project" value="UniProtKB-SubCell"/>
</dbReference>
<dbReference type="GO" id="GO:0005525">
    <property type="term" value="F:GTP binding"/>
    <property type="evidence" value="ECO:0007669"/>
    <property type="project" value="UniProtKB-UniRule"/>
</dbReference>
<dbReference type="GO" id="GO:0003924">
    <property type="term" value="F:GTPase activity"/>
    <property type="evidence" value="ECO:0007669"/>
    <property type="project" value="InterPro"/>
</dbReference>
<dbReference type="GO" id="GO:0003746">
    <property type="term" value="F:translation elongation factor activity"/>
    <property type="evidence" value="ECO:0007669"/>
    <property type="project" value="UniProtKB-UniRule"/>
</dbReference>
<dbReference type="GO" id="GO:0032790">
    <property type="term" value="P:ribosome disassembly"/>
    <property type="evidence" value="ECO:0007669"/>
    <property type="project" value="TreeGrafter"/>
</dbReference>
<dbReference type="CDD" id="cd01886">
    <property type="entry name" value="EF-G"/>
    <property type="match status" value="1"/>
</dbReference>
<dbReference type="CDD" id="cd16262">
    <property type="entry name" value="EFG_III"/>
    <property type="match status" value="1"/>
</dbReference>
<dbReference type="CDD" id="cd01434">
    <property type="entry name" value="EFG_mtEFG1_IV"/>
    <property type="match status" value="1"/>
</dbReference>
<dbReference type="CDD" id="cd03713">
    <property type="entry name" value="EFG_mtEFG_C"/>
    <property type="match status" value="1"/>
</dbReference>
<dbReference type="CDD" id="cd04088">
    <property type="entry name" value="EFG_mtEFG_II"/>
    <property type="match status" value="1"/>
</dbReference>
<dbReference type="FunFam" id="2.40.30.10:FF:000006">
    <property type="entry name" value="Elongation factor G"/>
    <property type="match status" value="1"/>
</dbReference>
<dbReference type="FunFam" id="3.30.230.10:FF:000003">
    <property type="entry name" value="Elongation factor G"/>
    <property type="match status" value="1"/>
</dbReference>
<dbReference type="FunFam" id="3.30.70.240:FF:000001">
    <property type="entry name" value="Elongation factor G"/>
    <property type="match status" value="1"/>
</dbReference>
<dbReference type="FunFam" id="3.30.70.870:FF:000001">
    <property type="entry name" value="Elongation factor G"/>
    <property type="match status" value="1"/>
</dbReference>
<dbReference type="FunFam" id="3.40.50.300:FF:000029">
    <property type="entry name" value="Elongation factor G"/>
    <property type="match status" value="1"/>
</dbReference>
<dbReference type="Gene3D" id="3.30.230.10">
    <property type="match status" value="1"/>
</dbReference>
<dbReference type="Gene3D" id="3.30.70.240">
    <property type="match status" value="1"/>
</dbReference>
<dbReference type="Gene3D" id="3.30.70.870">
    <property type="entry name" value="Elongation Factor G (Translational Gtpase), domain 3"/>
    <property type="match status" value="1"/>
</dbReference>
<dbReference type="Gene3D" id="3.40.50.300">
    <property type="entry name" value="P-loop containing nucleotide triphosphate hydrolases"/>
    <property type="match status" value="1"/>
</dbReference>
<dbReference type="Gene3D" id="2.40.30.10">
    <property type="entry name" value="Translation factors"/>
    <property type="match status" value="1"/>
</dbReference>
<dbReference type="HAMAP" id="MF_00054_B">
    <property type="entry name" value="EF_G_EF_2_B"/>
    <property type="match status" value="1"/>
</dbReference>
<dbReference type="InterPro" id="IPR041095">
    <property type="entry name" value="EFG_II"/>
</dbReference>
<dbReference type="InterPro" id="IPR009022">
    <property type="entry name" value="EFG_III"/>
</dbReference>
<dbReference type="InterPro" id="IPR035647">
    <property type="entry name" value="EFG_III/V"/>
</dbReference>
<dbReference type="InterPro" id="IPR047872">
    <property type="entry name" value="EFG_IV"/>
</dbReference>
<dbReference type="InterPro" id="IPR035649">
    <property type="entry name" value="EFG_V"/>
</dbReference>
<dbReference type="InterPro" id="IPR000640">
    <property type="entry name" value="EFG_V-like"/>
</dbReference>
<dbReference type="InterPro" id="IPR004161">
    <property type="entry name" value="EFTu-like_2"/>
</dbReference>
<dbReference type="InterPro" id="IPR031157">
    <property type="entry name" value="G_TR_CS"/>
</dbReference>
<dbReference type="InterPro" id="IPR027417">
    <property type="entry name" value="P-loop_NTPase"/>
</dbReference>
<dbReference type="InterPro" id="IPR020568">
    <property type="entry name" value="Ribosomal_Su5_D2-typ_SF"/>
</dbReference>
<dbReference type="InterPro" id="IPR014721">
    <property type="entry name" value="Ribsml_uS5_D2-typ_fold_subgr"/>
</dbReference>
<dbReference type="InterPro" id="IPR005225">
    <property type="entry name" value="Small_GTP-bd"/>
</dbReference>
<dbReference type="InterPro" id="IPR000795">
    <property type="entry name" value="T_Tr_GTP-bd_dom"/>
</dbReference>
<dbReference type="InterPro" id="IPR009000">
    <property type="entry name" value="Transl_B-barrel_sf"/>
</dbReference>
<dbReference type="InterPro" id="IPR004540">
    <property type="entry name" value="Transl_elong_EFG/EF2"/>
</dbReference>
<dbReference type="InterPro" id="IPR005517">
    <property type="entry name" value="Transl_elong_EFG/EF2_IV"/>
</dbReference>
<dbReference type="NCBIfam" id="TIGR00484">
    <property type="entry name" value="EF-G"/>
    <property type="match status" value="1"/>
</dbReference>
<dbReference type="NCBIfam" id="NF009379">
    <property type="entry name" value="PRK12740.1-3"/>
    <property type="match status" value="1"/>
</dbReference>
<dbReference type="NCBIfam" id="NF009381">
    <property type="entry name" value="PRK12740.1-5"/>
    <property type="match status" value="1"/>
</dbReference>
<dbReference type="NCBIfam" id="NF009891">
    <property type="entry name" value="PRK13351.1-1"/>
    <property type="match status" value="1"/>
</dbReference>
<dbReference type="NCBIfam" id="TIGR00231">
    <property type="entry name" value="small_GTP"/>
    <property type="match status" value="1"/>
</dbReference>
<dbReference type="PANTHER" id="PTHR43261:SF1">
    <property type="entry name" value="RIBOSOME-RELEASING FACTOR 2, MITOCHONDRIAL"/>
    <property type="match status" value="1"/>
</dbReference>
<dbReference type="PANTHER" id="PTHR43261">
    <property type="entry name" value="TRANSLATION ELONGATION FACTOR G-RELATED"/>
    <property type="match status" value="1"/>
</dbReference>
<dbReference type="Pfam" id="PF00679">
    <property type="entry name" value="EFG_C"/>
    <property type="match status" value="1"/>
</dbReference>
<dbReference type="Pfam" id="PF14492">
    <property type="entry name" value="EFG_III"/>
    <property type="match status" value="1"/>
</dbReference>
<dbReference type="Pfam" id="PF03764">
    <property type="entry name" value="EFG_IV"/>
    <property type="match status" value="1"/>
</dbReference>
<dbReference type="Pfam" id="PF00009">
    <property type="entry name" value="GTP_EFTU"/>
    <property type="match status" value="1"/>
</dbReference>
<dbReference type="Pfam" id="PF03144">
    <property type="entry name" value="GTP_EFTU_D2"/>
    <property type="match status" value="1"/>
</dbReference>
<dbReference type="PRINTS" id="PR00315">
    <property type="entry name" value="ELONGATNFCT"/>
</dbReference>
<dbReference type="SMART" id="SM00838">
    <property type="entry name" value="EFG_C"/>
    <property type="match status" value="1"/>
</dbReference>
<dbReference type="SMART" id="SM00889">
    <property type="entry name" value="EFG_IV"/>
    <property type="match status" value="1"/>
</dbReference>
<dbReference type="SUPFAM" id="SSF54980">
    <property type="entry name" value="EF-G C-terminal domain-like"/>
    <property type="match status" value="2"/>
</dbReference>
<dbReference type="SUPFAM" id="SSF52540">
    <property type="entry name" value="P-loop containing nucleoside triphosphate hydrolases"/>
    <property type="match status" value="1"/>
</dbReference>
<dbReference type="SUPFAM" id="SSF54211">
    <property type="entry name" value="Ribosomal protein S5 domain 2-like"/>
    <property type="match status" value="1"/>
</dbReference>
<dbReference type="SUPFAM" id="SSF50447">
    <property type="entry name" value="Translation proteins"/>
    <property type="match status" value="1"/>
</dbReference>
<dbReference type="PROSITE" id="PS00301">
    <property type="entry name" value="G_TR_1"/>
    <property type="match status" value="1"/>
</dbReference>
<dbReference type="PROSITE" id="PS51722">
    <property type="entry name" value="G_TR_2"/>
    <property type="match status" value="1"/>
</dbReference>
<accession>Q8R7V1</accession>
<sequence>MPRDFSLDKVRNIGIMAHIDAGKTTTTERILFYTGKTHKLGEVHEGTATMDWMVQEQERGITITSAATTCYWKGHKINIIDTPGHVDFTVEVERSLRILDGAVAVFSAKEGVEPQSETVWRQADKYHVPRIAYVNKMDVIGADFFNVIDMIRERLGANPVAIQIPIGKEDTFRGIVDLIKMEAIIYKDDLGTVMDETEIPEDLKPLAEEYREKLLEAIAEVDETIMEKYLEGEEITEEEIHAALRKGTINGELVPVVCGSSYKNKGVQPLLDAIVNYLPSPLDLPPVKGMSIDGGEELERKPDDNEPFSALAFKIMADPYVGKLAFFRVYSGTLKAGSYVLNSTKGKKERIGRILRMHANHREEIDAVYTGDIAAAVGLKDTTTGDTLCDENHPILLESMDFPEPVISVAIEPKTKAAQEKMSIALSKLAEEDPTFKTYTDQETGQTIIAGMGELHLEIIVDRLRREFNVECNVGKPQVAYKETITKPVRVEGKFIRQSGGRGQYGHVWLEMEPAPRGEGYIFENRIVGGVIPKEFIPAVDAGIQEAMQNGVLGGYPVIDVKVALVDGSYHEVDSSDMAFKIAGSIAFREGMKKADPVLLEPIMKVEVVVPEEYMGDVIGDLNARRGKVEGMETRSGARVIRAFVPLAEMFGYATDLRSKTQGRGTYTMQFHHYEEVPKNIAEQILSAKK</sequence>
<organism>
    <name type="scientific">Caldanaerobacter subterraneus subsp. tengcongensis (strain DSM 15242 / JCM 11007 / NBRC 100824 / MB4)</name>
    <name type="common">Thermoanaerobacter tengcongensis</name>
    <dbReference type="NCBI Taxonomy" id="273068"/>
    <lineage>
        <taxon>Bacteria</taxon>
        <taxon>Bacillati</taxon>
        <taxon>Bacillota</taxon>
        <taxon>Clostridia</taxon>
        <taxon>Thermoanaerobacterales</taxon>
        <taxon>Thermoanaerobacteraceae</taxon>
        <taxon>Caldanaerobacter</taxon>
    </lineage>
</organism>
<name>EFG_CALS4</name>
<reference key="1">
    <citation type="journal article" date="2002" name="Genome Res.">
        <title>A complete sequence of the T. tengcongensis genome.</title>
        <authorList>
            <person name="Bao Q."/>
            <person name="Tian Y."/>
            <person name="Li W."/>
            <person name="Xu Z."/>
            <person name="Xuan Z."/>
            <person name="Hu S."/>
            <person name="Dong W."/>
            <person name="Yang J."/>
            <person name="Chen Y."/>
            <person name="Xue Y."/>
            <person name="Xu Y."/>
            <person name="Lai X."/>
            <person name="Huang L."/>
            <person name="Dong X."/>
            <person name="Ma Y."/>
            <person name="Ling L."/>
            <person name="Tan H."/>
            <person name="Chen R."/>
            <person name="Wang J."/>
            <person name="Yu J."/>
            <person name="Yang H."/>
        </authorList>
    </citation>
    <scope>NUCLEOTIDE SEQUENCE [LARGE SCALE GENOMIC DNA]</scope>
    <source>
        <strain>DSM 15242 / JCM 11007 / NBRC 100824 / MB4</strain>
    </source>
</reference>